<organism>
    <name type="scientific">Rhizobium etli (strain ATCC 51251 / DSM 11541 / JCM 21823 / NBRC 15573 / CFN 42)</name>
    <dbReference type="NCBI Taxonomy" id="347834"/>
    <lineage>
        <taxon>Bacteria</taxon>
        <taxon>Pseudomonadati</taxon>
        <taxon>Pseudomonadota</taxon>
        <taxon>Alphaproteobacteria</taxon>
        <taxon>Hyphomicrobiales</taxon>
        <taxon>Rhizobiaceae</taxon>
        <taxon>Rhizobium/Agrobacterium group</taxon>
        <taxon>Rhizobium</taxon>
    </lineage>
</organism>
<reference key="1">
    <citation type="journal article" date="2006" name="Proc. Natl. Acad. Sci. U.S.A.">
        <title>The partitioned Rhizobium etli genome: genetic and metabolic redundancy in seven interacting replicons.</title>
        <authorList>
            <person name="Gonzalez V."/>
            <person name="Santamaria R.I."/>
            <person name="Bustos P."/>
            <person name="Hernandez-Gonzalez I."/>
            <person name="Medrano-Soto A."/>
            <person name="Moreno-Hagelsieb G."/>
            <person name="Janga S.C."/>
            <person name="Ramirez M.A."/>
            <person name="Jimenez-Jacinto V."/>
            <person name="Collado-Vides J."/>
            <person name="Davila G."/>
        </authorList>
    </citation>
    <scope>NUCLEOTIDE SEQUENCE [LARGE SCALE GENOMIC DNA]</scope>
    <source>
        <strain>ATCC 51251 / DSM 11541 / JCM 21823 / NBRC 15573 / CFN 42</strain>
    </source>
</reference>
<accession>Q2K9S5</accession>
<protein>
    <recommendedName>
        <fullName evidence="1">NADH-quinone oxidoreductase subunit H 1</fullName>
        <ecNumber evidence="1">7.1.1.-</ecNumber>
    </recommendedName>
    <alternativeName>
        <fullName evidence="1">NADH dehydrogenase I subunit H 1</fullName>
    </alternativeName>
    <alternativeName>
        <fullName evidence="1">NDH-1 subunit H 1</fullName>
    </alternativeName>
</protein>
<proteinExistence type="inferred from homology"/>
<sequence length="347" mass="38415">MDSFFSTYVLPAIIMIGQSLLLLVCLLVFIAYVLLADRKIWAAVQLRRGPNVVGPFGLFQSFADLLKFVFKEPIIPAGANKAVFLLAPLVTVLLALSTWAVVPLADGWVIANINVGILYIFAISSLEVYGIIMGGWASNSKYPFLGALRSAAQMVSYEVSIGFVIVTVLLCVGSLNLTDIVNAQHTGLGTVLGLPASFLDWHWLSLFPMFIVFFISALAETNRPPFDLPEAESELVAGFMVEYGSSPYMMFMLGEYAAVCLMCALTTILFLGGWLPPVDIWILNWVPGIIWFTLKACLVFFMFAMVKAFVPRYRYDQLMRLGWKVFLPLSLAMVIIVAFVLKLMGWA</sequence>
<comment type="function">
    <text evidence="1">NDH-1 shuttles electrons from NADH, via FMN and iron-sulfur (Fe-S) centers, to quinones in the respiratory chain. The immediate electron acceptor for the enzyme in this species is believed to be ubiquinone. Couples the redox reaction to proton translocation (for every two electrons transferred, four hydrogen ions are translocated across the cytoplasmic membrane), and thus conserves the redox energy in a proton gradient. This subunit may bind ubiquinone.</text>
</comment>
<comment type="catalytic activity">
    <reaction evidence="1">
        <text>a quinone + NADH + 5 H(+)(in) = a quinol + NAD(+) + 4 H(+)(out)</text>
        <dbReference type="Rhea" id="RHEA:57888"/>
        <dbReference type="ChEBI" id="CHEBI:15378"/>
        <dbReference type="ChEBI" id="CHEBI:24646"/>
        <dbReference type="ChEBI" id="CHEBI:57540"/>
        <dbReference type="ChEBI" id="CHEBI:57945"/>
        <dbReference type="ChEBI" id="CHEBI:132124"/>
    </reaction>
</comment>
<comment type="subunit">
    <text evidence="1">NDH-1 is composed of 14 different subunits. Subunits NuoA, H, J, K, L, M, N constitute the membrane sector of the complex.</text>
</comment>
<comment type="subcellular location">
    <subcellularLocation>
        <location evidence="1">Cell inner membrane</location>
        <topology evidence="1">Multi-pass membrane protein</topology>
    </subcellularLocation>
</comment>
<comment type="similarity">
    <text evidence="1">Belongs to the complex I subunit 1 family.</text>
</comment>
<evidence type="ECO:0000255" key="1">
    <source>
        <dbReference type="HAMAP-Rule" id="MF_01350"/>
    </source>
</evidence>
<keyword id="KW-0997">Cell inner membrane</keyword>
<keyword id="KW-1003">Cell membrane</keyword>
<keyword id="KW-0472">Membrane</keyword>
<keyword id="KW-0520">NAD</keyword>
<keyword id="KW-0874">Quinone</keyword>
<keyword id="KW-1185">Reference proteome</keyword>
<keyword id="KW-1278">Translocase</keyword>
<keyword id="KW-0812">Transmembrane</keyword>
<keyword id="KW-1133">Transmembrane helix</keyword>
<keyword id="KW-0830">Ubiquinone</keyword>
<dbReference type="EC" id="7.1.1.-" evidence="1"/>
<dbReference type="EMBL" id="CP000133">
    <property type="protein sequence ID" value="ABC90411.1"/>
    <property type="molecule type" value="Genomic_DNA"/>
</dbReference>
<dbReference type="RefSeq" id="WP_011424931.1">
    <property type="nucleotide sequence ID" value="NC_007761.1"/>
</dbReference>
<dbReference type="SMR" id="Q2K9S5"/>
<dbReference type="KEGG" id="ret:RHE_CH01612"/>
<dbReference type="eggNOG" id="COG1005">
    <property type="taxonomic scope" value="Bacteria"/>
</dbReference>
<dbReference type="HOGENOM" id="CLU_015134_0_1_5"/>
<dbReference type="OrthoDB" id="9803734at2"/>
<dbReference type="Proteomes" id="UP000001936">
    <property type="component" value="Chromosome"/>
</dbReference>
<dbReference type="GO" id="GO:0005886">
    <property type="term" value="C:plasma membrane"/>
    <property type="evidence" value="ECO:0007669"/>
    <property type="project" value="UniProtKB-SubCell"/>
</dbReference>
<dbReference type="GO" id="GO:0003954">
    <property type="term" value="F:NADH dehydrogenase activity"/>
    <property type="evidence" value="ECO:0007669"/>
    <property type="project" value="TreeGrafter"/>
</dbReference>
<dbReference type="GO" id="GO:0016655">
    <property type="term" value="F:oxidoreductase activity, acting on NAD(P)H, quinone or similar compound as acceptor"/>
    <property type="evidence" value="ECO:0007669"/>
    <property type="project" value="UniProtKB-UniRule"/>
</dbReference>
<dbReference type="GO" id="GO:0048038">
    <property type="term" value="F:quinone binding"/>
    <property type="evidence" value="ECO:0007669"/>
    <property type="project" value="UniProtKB-KW"/>
</dbReference>
<dbReference type="GO" id="GO:0009060">
    <property type="term" value="P:aerobic respiration"/>
    <property type="evidence" value="ECO:0007669"/>
    <property type="project" value="TreeGrafter"/>
</dbReference>
<dbReference type="HAMAP" id="MF_01350">
    <property type="entry name" value="NDH1_NuoH"/>
    <property type="match status" value="1"/>
</dbReference>
<dbReference type="InterPro" id="IPR001694">
    <property type="entry name" value="NADH_UbQ_OxRdtase_su1/FPO"/>
</dbReference>
<dbReference type="InterPro" id="IPR018086">
    <property type="entry name" value="NADH_UbQ_OxRdtase_su1_CS"/>
</dbReference>
<dbReference type="NCBIfam" id="NF004741">
    <property type="entry name" value="PRK06076.1-2"/>
    <property type="match status" value="1"/>
</dbReference>
<dbReference type="NCBIfam" id="NF004745">
    <property type="entry name" value="PRK06076.1-6"/>
    <property type="match status" value="1"/>
</dbReference>
<dbReference type="PANTHER" id="PTHR11432">
    <property type="entry name" value="NADH DEHYDROGENASE SUBUNIT 1"/>
    <property type="match status" value="1"/>
</dbReference>
<dbReference type="PANTHER" id="PTHR11432:SF3">
    <property type="entry name" value="NADH-UBIQUINONE OXIDOREDUCTASE CHAIN 1"/>
    <property type="match status" value="1"/>
</dbReference>
<dbReference type="Pfam" id="PF00146">
    <property type="entry name" value="NADHdh"/>
    <property type="match status" value="1"/>
</dbReference>
<dbReference type="PROSITE" id="PS00668">
    <property type="entry name" value="COMPLEX1_ND1_2"/>
    <property type="match status" value="1"/>
</dbReference>
<name>NUOH1_RHIEC</name>
<gene>
    <name evidence="1" type="primary">nuoH1</name>
    <name type="ordered locus">RHE_CH01612</name>
</gene>
<feature type="chain" id="PRO_0000244935" description="NADH-quinone oxidoreductase subunit H 1">
    <location>
        <begin position="1"/>
        <end position="347"/>
    </location>
</feature>
<feature type="transmembrane region" description="Helical" evidence="1">
    <location>
        <begin position="13"/>
        <end position="33"/>
    </location>
</feature>
<feature type="transmembrane region" description="Helical" evidence="1">
    <location>
        <begin position="50"/>
        <end position="70"/>
    </location>
</feature>
<feature type="transmembrane region" description="Helical" evidence="1">
    <location>
        <begin position="82"/>
        <end position="102"/>
    </location>
</feature>
<feature type="transmembrane region" description="Helical" evidence="1">
    <location>
        <begin position="115"/>
        <end position="135"/>
    </location>
</feature>
<feature type="transmembrane region" description="Helical" evidence="1">
    <location>
        <begin position="161"/>
        <end position="181"/>
    </location>
</feature>
<feature type="transmembrane region" description="Helical" evidence="1">
    <location>
        <begin position="198"/>
        <end position="218"/>
    </location>
</feature>
<feature type="transmembrane region" description="Helical" evidence="1">
    <location>
        <begin position="263"/>
        <end position="283"/>
    </location>
</feature>
<feature type="transmembrane region" description="Helical" evidence="1">
    <location>
        <begin position="286"/>
        <end position="306"/>
    </location>
</feature>
<feature type="transmembrane region" description="Helical" evidence="1">
    <location>
        <begin position="321"/>
        <end position="341"/>
    </location>
</feature>